<feature type="chain" id="PRO_0000199272" description="Phycocyanobilin lyase subunit alpha">
    <location>
        <begin position="1"/>
        <end position="272"/>
    </location>
</feature>
<dbReference type="EC" id="4.-.-.-"/>
<dbReference type="EMBL" id="BA000022">
    <property type="protein sequence ID" value="BAA17683.1"/>
    <property type="molecule type" value="Genomic_DNA"/>
</dbReference>
<dbReference type="PIR" id="S77125">
    <property type="entry name" value="S77125"/>
</dbReference>
<dbReference type="SMR" id="P73638"/>
<dbReference type="IntAct" id="P73638">
    <property type="interactions" value="4"/>
</dbReference>
<dbReference type="STRING" id="1148.gene:10498550"/>
<dbReference type="PaxDb" id="1148-1652764"/>
<dbReference type="EnsemblBacteria" id="BAA17683">
    <property type="protein sequence ID" value="BAA17683"/>
    <property type="gene ID" value="BAA17683"/>
</dbReference>
<dbReference type="KEGG" id="syn:slr1878"/>
<dbReference type="eggNOG" id="COG1413">
    <property type="taxonomic scope" value="Bacteria"/>
</dbReference>
<dbReference type="InParanoid" id="P73638"/>
<dbReference type="PhylomeDB" id="P73638"/>
<dbReference type="BRENDA" id="4.4.1.32">
    <property type="organism ID" value="382"/>
</dbReference>
<dbReference type="Proteomes" id="UP000001425">
    <property type="component" value="Chromosome"/>
</dbReference>
<dbReference type="GO" id="GO:0030089">
    <property type="term" value="C:phycobilisome"/>
    <property type="evidence" value="ECO:0007669"/>
    <property type="project" value="UniProtKB-KW"/>
</dbReference>
<dbReference type="GO" id="GO:0016829">
    <property type="term" value="F:lyase activity"/>
    <property type="evidence" value="ECO:0007669"/>
    <property type="project" value="UniProtKB-KW"/>
</dbReference>
<dbReference type="GO" id="GO:0016491">
    <property type="term" value="F:oxidoreductase activity"/>
    <property type="evidence" value="ECO:0000318"/>
    <property type="project" value="GO_Central"/>
</dbReference>
<dbReference type="Gene3D" id="1.25.10.10">
    <property type="entry name" value="Leucine-rich Repeat Variant"/>
    <property type="match status" value="2"/>
</dbReference>
<dbReference type="InterPro" id="IPR011989">
    <property type="entry name" value="ARM-like"/>
</dbReference>
<dbReference type="InterPro" id="IPR016024">
    <property type="entry name" value="ARM-type_fold"/>
</dbReference>
<dbReference type="InterPro" id="IPR004155">
    <property type="entry name" value="PBS_lyase_HEAT"/>
</dbReference>
<dbReference type="PANTHER" id="PTHR12697:SF5">
    <property type="entry name" value="DEOXYHYPUSINE HYDROXYLASE"/>
    <property type="match status" value="1"/>
</dbReference>
<dbReference type="PANTHER" id="PTHR12697">
    <property type="entry name" value="PBS LYASE HEAT-LIKE PROTEIN"/>
    <property type="match status" value="1"/>
</dbReference>
<dbReference type="Pfam" id="PF13646">
    <property type="entry name" value="HEAT_2"/>
    <property type="match status" value="1"/>
</dbReference>
<dbReference type="Pfam" id="PF03130">
    <property type="entry name" value="HEAT_PBS"/>
    <property type="match status" value="1"/>
</dbReference>
<dbReference type="SMART" id="SM00567">
    <property type="entry name" value="EZ_HEAT"/>
    <property type="match status" value="5"/>
</dbReference>
<dbReference type="SUPFAM" id="SSF48371">
    <property type="entry name" value="ARM repeat"/>
    <property type="match status" value="1"/>
</dbReference>
<protein>
    <recommendedName>
        <fullName>Phycocyanobilin lyase subunit alpha</fullName>
        <ecNumber>4.-.-.-</ecNumber>
    </recommendedName>
    <alternativeName>
        <fullName>Phycocyanin operon protein CpcE</fullName>
    </alternativeName>
</protein>
<name>CPCE_SYNY3</name>
<accession>P73638</accession>
<sequence>MSEPNLNPAYTLDQAIANLQQTEDASARYYAAWWIGRFRAAQPETIAALLVALEDETDRSPDGGYPLRRNAAKALGKLGDRQVVPALIKALECEDYYVRESAAQALEGLGDARAMAPLMAKLTGGLAAAQLVEGKPHLAQPYEAIIEALGTLQAVESIGLIEPFLEHFSPKVQYAAARALFQLTGDNRYGDLLITALGGTDLQLRRSAMMDLGATGYLPGAQAIAKAFAENSLKLIALRDLWATHRQRQASSESKALSPASRQILELMDSLL</sequence>
<organism>
    <name type="scientific">Synechocystis sp. (strain ATCC 27184 / PCC 6803 / Kazusa)</name>
    <dbReference type="NCBI Taxonomy" id="1111708"/>
    <lineage>
        <taxon>Bacteria</taxon>
        <taxon>Bacillati</taxon>
        <taxon>Cyanobacteriota</taxon>
        <taxon>Cyanophyceae</taxon>
        <taxon>Synechococcales</taxon>
        <taxon>Merismopediaceae</taxon>
        <taxon>Synechocystis</taxon>
    </lineage>
</organism>
<comment type="function">
    <text evidence="1">Required for the chromophorylation of the CpcA gene product.</text>
</comment>
<comment type="subunit">
    <text evidence="1">CpcE and CpcF associate to form a lyase.</text>
</comment>
<comment type="similarity">
    <text evidence="2">Belongs to the CpcE/RpcE/PecE family.</text>
</comment>
<proteinExistence type="inferred from homology"/>
<gene>
    <name type="primary">cpcE</name>
    <name type="ordered locus">slr1878</name>
</gene>
<reference key="1">
    <citation type="journal article" date="1996" name="DNA Res.">
        <title>Sequence analysis of the genome of the unicellular cyanobacterium Synechocystis sp. strain PCC6803. II. Sequence determination of the entire genome and assignment of potential protein-coding regions.</title>
        <authorList>
            <person name="Kaneko T."/>
            <person name="Sato S."/>
            <person name="Kotani H."/>
            <person name="Tanaka A."/>
            <person name="Asamizu E."/>
            <person name="Nakamura Y."/>
            <person name="Miyajima N."/>
            <person name="Hirosawa M."/>
            <person name="Sugiura M."/>
            <person name="Sasamoto S."/>
            <person name="Kimura T."/>
            <person name="Hosouchi T."/>
            <person name="Matsuno A."/>
            <person name="Muraki A."/>
            <person name="Nakazaki N."/>
            <person name="Naruo K."/>
            <person name="Okumura S."/>
            <person name="Shimpo S."/>
            <person name="Takeuchi C."/>
            <person name="Wada T."/>
            <person name="Watanabe A."/>
            <person name="Yamada M."/>
            <person name="Yasuda M."/>
            <person name="Tabata S."/>
        </authorList>
    </citation>
    <scope>NUCLEOTIDE SEQUENCE [LARGE SCALE GENOMIC DNA]</scope>
    <source>
        <strain>ATCC 27184 / PCC 6803 / Kazusa</strain>
    </source>
</reference>
<evidence type="ECO:0000250" key="1"/>
<evidence type="ECO:0000305" key="2"/>
<keyword id="KW-0042">Antenna complex</keyword>
<keyword id="KW-0456">Lyase</keyword>
<keyword id="KW-0605">Phycobilisome</keyword>
<keyword id="KW-1185">Reference proteome</keyword>